<evidence type="ECO:0000255" key="1">
    <source>
        <dbReference type="HAMAP-Rule" id="MF_03113"/>
    </source>
</evidence>
<sequence length="198" mass="23205">MDPFSILLTLTLIILAQNAVRIVGKSQIHQSIWNLYLRYSNDQQILKLRNLKAESYDVYKQRSNTSAQDEYAKWTKLNRKYDQLQTEIKAVSDQVSQQQQAIEKYLGLAISVTTTLPLWLFRFKYRKQPLFYFPKDTFPSYLEWILSFPSVPQGSIGIMFWILLLNKFVSNLEFIVKTFSTKVEKPVPIVKVEDLSPK</sequence>
<keyword id="KW-0175">Coiled coil</keyword>
<keyword id="KW-0256">Endoplasmic reticulum</keyword>
<keyword id="KW-0931">ER-Golgi transport</keyword>
<keyword id="KW-0333">Golgi apparatus</keyword>
<keyword id="KW-0472">Membrane</keyword>
<keyword id="KW-1185">Reference proteome</keyword>
<keyword id="KW-0812">Transmembrane</keyword>
<keyword id="KW-1133">Transmembrane helix</keyword>
<keyword id="KW-0813">Transport</keyword>
<gene>
    <name evidence="1" type="primary">GET1</name>
    <name type="ordered locus">PAS_chr4_0403</name>
</gene>
<name>GET1_KOMPG</name>
<comment type="function">
    <text evidence="1">Required for the post-translational delivery of tail-anchored (TA) proteins to the endoplasmic reticulum. Together with GET2, acts as a membrane receptor for soluble GET3, which recognizes and selectively binds the transmembrane domain of TA proteins in the cytosol. The GET complex cooperates with the HDEL receptor ERD2 to mediate the ATP-dependent retrieval of resident ER proteins that contain a C-terminal H-D-E-L retention signal from the Golgi to the ER.</text>
</comment>
<comment type="subunit">
    <text evidence="1">Component of the Golgi to ER traffic (GET) complex, which is composed of GET1, GET2 and GET3. Within the complex, GET1 and GET2 form a heterotetramer which is stabilized by phosphatidylinositol binding and which binds to the GET3 homodimer.</text>
</comment>
<comment type="subcellular location">
    <subcellularLocation>
        <location evidence="1">Endoplasmic reticulum membrane</location>
        <topology evidence="1">Multi-pass membrane protein</topology>
    </subcellularLocation>
    <subcellularLocation>
        <location evidence="1">Golgi apparatus membrane</location>
        <topology evidence="1">Multi-pass membrane protein</topology>
    </subcellularLocation>
</comment>
<comment type="similarity">
    <text evidence="1">Belongs to the WRB/GET1 family.</text>
</comment>
<proteinExistence type="inferred from homology"/>
<protein>
    <recommendedName>
        <fullName evidence="1">Golgi to ER traffic protein 1</fullName>
    </recommendedName>
    <alternativeName>
        <fullName evidence="1">Guided entry of tail-anchored proteins 1</fullName>
    </alternativeName>
</protein>
<feature type="chain" id="PRO_0000388610" description="Golgi to ER traffic protein 1">
    <location>
        <begin position="1"/>
        <end position="198"/>
    </location>
</feature>
<feature type="topological domain" description="Lumenal" evidence="1">
    <location>
        <begin position="1"/>
        <end position="6"/>
    </location>
</feature>
<feature type="transmembrane region" description="Helical" evidence="1">
    <location>
        <begin position="7"/>
        <end position="26"/>
    </location>
</feature>
<feature type="topological domain" description="Cytoplasmic" evidence="1">
    <location>
        <begin position="27"/>
        <end position="110"/>
    </location>
</feature>
<feature type="transmembrane region" description="Helical" evidence="1">
    <location>
        <begin position="111"/>
        <end position="131"/>
    </location>
</feature>
<feature type="topological domain" description="Lumenal" evidence="1">
    <location>
        <begin position="132"/>
        <end position="155"/>
    </location>
</feature>
<feature type="transmembrane region" description="Helical" evidence="1">
    <location>
        <begin position="156"/>
        <end position="172"/>
    </location>
</feature>
<feature type="topological domain" description="Cytoplasmic" evidence="1">
    <location>
        <begin position="173"/>
        <end position="198"/>
    </location>
</feature>
<feature type="coiled-coil region" evidence="1">
    <location>
        <begin position="73"/>
        <end position="106"/>
    </location>
</feature>
<reference key="1">
    <citation type="journal article" date="2009" name="Nat. Biotechnol.">
        <title>Genome sequence of the recombinant protein production host Pichia pastoris.</title>
        <authorList>
            <person name="De Schutter K."/>
            <person name="Lin Y.-C."/>
            <person name="Tiels P."/>
            <person name="Van Hecke A."/>
            <person name="Glinka S."/>
            <person name="Weber-Lehmann J."/>
            <person name="Rouze P."/>
            <person name="Van de Peer Y."/>
            <person name="Callewaert N."/>
        </authorList>
    </citation>
    <scope>NUCLEOTIDE SEQUENCE [LARGE SCALE GENOMIC DNA]</scope>
    <source>
        <strain>GS115 / ATCC 20864</strain>
    </source>
</reference>
<organism>
    <name type="scientific">Komagataella phaffii (strain GS115 / ATCC 20864)</name>
    <name type="common">Yeast</name>
    <name type="synonym">Pichia pastoris</name>
    <dbReference type="NCBI Taxonomy" id="644223"/>
    <lineage>
        <taxon>Eukaryota</taxon>
        <taxon>Fungi</taxon>
        <taxon>Dikarya</taxon>
        <taxon>Ascomycota</taxon>
        <taxon>Saccharomycotina</taxon>
        <taxon>Pichiomycetes</taxon>
        <taxon>Pichiales</taxon>
        <taxon>Pichiaceae</taxon>
        <taxon>Komagataella</taxon>
    </lineage>
</organism>
<accession>C4R7S7</accession>
<dbReference type="EMBL" id="FN392322">
    <property type="protein sequence ID" value="CAY71652.1"/>
    <property type="molecule type" value="Genomic_DNA"/>
</dbReference>
<dbReference type="RefSeq" id="XP_002493831.1">
    <property type="nucleotide sequence ID" value="XM_002493786.1"/>
</dbReference>
<dbReference type="SMR" id="C4R7S7"/>
<dbReference type="FunCoup" id="C4R7S7">
    <property type="interactions" value="39"/>
</dbReference>
<dbReference type="STRING" id="644223.C4R7S7"/>
<dbReference type="EnsemblFungi" id="CAY71652">
    <property type="protein sequence ID" value="CAY71652"/>
    <property type="gene ID" value="PAS_chr4_0403"/>
</dbReference>
<dbReference type="GeneID" id="8200686"/>
<dbReference type="KEGG" id="ppa:PAS_chr4_0403"/>
<dbReference type="eggNOG" id="KOG4253">
    <property type="taxonomic scope" value="Eukaryota"/>
</dbReference>
<dbReference type="HOGENOM" id="CLU_089418_2_0_1"/>
<dbReference type="InParanoid" id="C4R7S7"/>
<dbReference type="OMA" id="AEWIISF"/>
<dbReference type="OrthoDB" id="69461at2759"/>
<dbReference type="Proteomes" id="UP000000314">
    <property type="component" value="Chromosome 4"/>
</dbReference>
<dbReference type="GO" id="GO:0005789">
    <property type="term" value="C:endoplasmic reticulum membrane"/>
    <property type="evidence" value="ECO:0007669"/>
    <property type="project" value="UniProtKB-SubCell"/>
</dbReference>
<dbReference type="GO" id="GO:0043529">
    <property type="term" value="C:GET complex"/>
    <property type="evidence" value="ECO:0007669"/>
    <property type="project" value="UniProtKB-UniRule"/>
</dbReference>
<dbReference type="GO" id="GO:0000139">
    <property type="term" value="C:Golgi membrane"/>
    <property type="evidence" value="ECO:0007669"/>
    <property type="project" value="UniProtKB-SubCell"/>
</dbReference>
<dbReference type="GO" id="GO:0043495">
    <property type="term" value="F:protein-membrane adaptor activity"/>
    <property type="evidence" value="ECO:0007669"/>
    <property type="project" value="TreeGrafter"/>
</dbReference>
<dbReference type="GO" id="GO:0071816">
    <property type="term" value="P:tail-anchored membrane protein insertion into ER membrane"/>
    <property type="evidence" value="ECO:0007669"/>
    <property type="project" value="InterPro"/>
</dbReference>
<dbReference type="GO" id="GO:0016192">
    <property type="term" value="P:vesicle-mediated transport"/>
    <property type="evidence" value="ECO:0007669"/>
    <property type="project" value="UniProtKB-KW"/>
</dbReference>
<dbReference type="Gene3D" id="1.10.287.660">
    <property type="entry name" value="Helix hairpin bin"/>
    <property type="match status" value="1"/>
</dbReference>
<dbReference type="HAMAP" id="MF_03113">
    <property type="entry name" value="Get1"/>
    <property type="match status" value="1"/>
</dbReference>
<dbReference type="InterPro" id="IPR028945">
    <property type="entry name" value="Get1"/>
</dbReference>
<dbReference type="InterPro" id="IPR027538">
    <property type="entry name" value="Get1_fungi"/>
</dbReference>
<dbReference type="InterPro" id="IPR029012">
    <property type="entry name" value="Helix_hairpin_bin_sf"/>
</dbReference>
<dbReference type="PANTHER" id="PTHR42650:SF1">
    <property type="entry name" value="GUIDED ENTRY OF TAIL-ANCHORED PROTEINS FACTOR 1"/>
    <property type="match status" value="1"/>
</dbReference>
<dbReference type="PANTHER" id="PTHR42650">
    <property type="entry name" value="TAIL-ANCHORED PROTEIN INSERTION RECEPTOR WRB"/>
    <property type="match status" value="1"/>
</dbReference>
<dbReference type="Pfam" id="PF04420">
    <property type="entry name" value="CHD5"/>
    <property type="match status" value="1"/>
</dbReference>